<comment type="function">
    <text evidence="1 2">Critical regulator of angiogenesis and endothelial cell (EC) migration. Promotes the migration of endothelial cells, which is essential for angiogenesis. Interacts with the linker of nucleoskeleton and cytoskeleton (LINC) complex, which plays a vital role in connecting the cell's cytoskeleton to the nuclear envelope. This interaction is essential for maintaining cellular structure and facilitating the movement of endothelial cells, which is critical for proper vascular development. Involved in nuclear movement during fibroblast polarization and migration. May recruit Ran GTPase to the nuclear periphery.</text>
</comment>
<comment type="subunit">
    <text evidence="2">Interacts with SUN2 and LMNA. May bind to Ran GTPase; has a greater affinity for Ran-GTP over Ran-GDP.</text>
</comment>
<comment type="subcellular location">
    <subcellularLocation>
        <location evidence="2">Nucleus inner membrane</location>
        <topology evidence="5">Multi-pass membrane protein</topology>
    </subcellularLocation>
    <subcellularLocation>
        <location evidence="2">Cytoplasm</location>
        <location evidence="2">Cytoskeleton</location>
        <location evidence="2">Spindle pole</location>
    </subcellularLocation>
</comment>
<comment type="similarity">
    <text evidence="5">Belongs to the TMEM201 family.</text>
</comment>
<evidence type="ECO:0000250" key="1">
    <source>
        <dbReference type="UniProtKB" id="A2A8U2"/>
    </source>
</evidence>
<evidence type="ECO:0000250" key="2">
    <source>
        <dbReference type="UniProtKB" id="Q5SNT2"/>
    </source>
</evidence>
<evidence type="ECO:0000255" key="3"/>
<evidence type="ECO:0000256" key="4">
    <source>
        <dbReference type="SAM" id="MobiDB-lite"/>
    </source>
</evidence>
<evidence type="ECO:0000305" key="5"/>
<reference key="1">
    <citation type="submission" date="2005-10" db="EMBL/GenBank/DDBJ databases">
        <authorList>
            <consortium name="NIH - Mammalian Gene Collection (MGC) project"/>
        </authorList>
    </citation>
    <scope>NUCLEOTIDE SEQUENCE [LARGE SCALE MRNA]</scope>
    <source>
        <strain>Hereford</strain>
        <tissue>Uterus</tissue>
    </source>
</reference>
<dbReference type="EMBL" id="BC108140">
    <property type="protein sequence ID" value="AAI08141.1"/>
    <property type="molecule type" value="mRNA"/>
</dbReference>
<dbReference type="RefSeq" id="NP_001032528.1">
    <property type="nucleotide sequence ID" value="NM_001037451.1"/>
</dbReference>
<dbReference type="STRING" id="9913.ENSBTAP00000064160"/>
<dbReference type="GlyCosmos" id="Q32PF0">
    <property type="glycosylation" value="2 sites, No reported glycans"/>
</dbReference>
<dbReference type="GlyGen" id="Q32PF0">
    <property type="glycosylation" value="2 sites"/>
</dbReference>
<dbReference type="PaxDb" id="9913-ENSBTAP00000004131"/>
<dbReference type="GeneID" id="507444"/>
<dbReference type="KEGG" id="bta:507444"/>
<dbReference type="CTD" id="199953"/>
<dbReference type="eggNOG" id="KOG4623">
    <property type="taxonomic scope" value="Eukaryota"/>
</dbReference>
<dbReference type="InParanoid" id="Q32PF0"/>
<dbReference type="OrthoDB" id="5966927at2759"/>
<dbReference type="Proteomes" id="UP000009136">
    <property type="component" value="Unplaced"/>
</dbReference>
<dbReference type="GO" id="GO:0005737">
    <property type="term" value="C:cytoplasm"/>
    <property type="evidence" value="ECO:0007669"/>
    <property type="project" value="UniProtKB-KW"/>
</dbReference>
<dbReference type="GO" id="GO:0005637">
    <property type="term" value="C:nuclear inner membrane"/>
    <property type="evidence" value="ECO:0000250"/>
    <property type="project" value="UniProtKB"/>
</dbReference>
<dbReference type="GO" id="GO:0031965">
    <property type="term" value="C:nuclear membrane"/>
    <property type="evidence" value="ECO:0000318"/>
    <property type="project" value="GO_Central"/>
</dbReference>
<dbReference type="GO" id="GO:0000922">
    <property type="term" value="C:spindle pole"/>
    <property type="evidence" value="ECO:0007669"/>
    <property type="project" value="UniProtKB-SubCell"/>
</dbReference>
<dbReference type="GO" id="GO:0051015">
    <property type="term" value="F:actin filament binding"/>
    <property type="evidence" value="ECO:0000318"/>
    <property type="project" value="GO_Central"/>
</dbReference>
<dbReference type="GO" id="GO:0005521">
    <property type="term" value="F:lamin binding"/>
    <property type="evidence" value="ECO:0000318"/>
    <property type="project" value="GO_Central"/>
</dbReference>
<dbReference type="GO" id="GO:0001525">
    <property type="term" value="P:angiogenesis"/>
    <property type="evidence" value="ECO:0000250"/>
    <property type="project" value="UniProtKB"/>
</dbReference>
<dbReference type="GO" id="GO:0030473">
    <property type="term" value="P:nuclear migration along microtubule"/>
    <property type="evidence" value="ECO:0000318"/>
    <property type="project" value="GO_Central"/>
</dbReference>
<dbReference type="GO" id="GO:0010595">
    <property type="term" value="P:positive regulation of endothelial cell migration"/>
    <property type="evidence" value="ECO:0000250"/>
    <property type="project" value="UniProtKB"/>
</dbReference>
<dbReference type="InterPro" id="IPR018617">
    <property type="entry name" value="Ima1_N"/>
</dbReference>
<dbReference type="InterPro" id="IPR040041">
    <property type="entry name" value="TMEM201"/>
</dbReference>
<dbReference type="InterPro" id="IPR018861">
    <property type="entry name" value="TMEM201_C"/>
</dbReference>
<dbReference type="PANTHER" id="PTHR28646">
    <property type="entry name" value="TRANSMEMBRANE PROTEIN 201"/>
    <property type="match status" value="1"/>
</dbReference>
<dbReference type="PANTHER" id="PTHR28646:SF1">
    <property type="entry name" value="TRANSMEMBRANE PROTEIN 201"/>
    <property type="match status" value="1"/>
</dbReference>
<dbReference type="Pfam" id="PF10476">
    <property type="entry name" value="DUF2448"/>
    <property type="match status" value="1"/>
</dbReference>
<dbReference type="Pfam" id="PF09779">
    <property type="entry name" value="Ima1_N"/>
    <property type="match status" value="1"/>
</dbReference>
<organism>
    <name type="scientific">Bos taurus</name>
    <name type="common">Bovine</name>
    <dbReference type="NCBI Taxonomy" id="9913"/>
    <lineage>
        <taxon>Eukaryota</taxon>
        <taxon>Metazoa</taxon>
        <taxon>Chordata</taxon>
        <taxon>Craniata</taxon>
        <taxon>Vertebrata</taxon>
        <taxon>Euteleostomi</taxon>
        <taxon>Mammalia</taxon>
        <taxon>Eutheria</taxon>
        <taxon>Laurasiatheria</taxon>
        <taxon>Artiodactyla</taxon>
        <taxon>Ruminantia</taxon>
        <taxon>Pecora</taxon>
        <taxon>Bovidae</taxon>
        <taxon>Bovinae</taxon>
        <taxon>Bos</taxon>
    </lineage>
</organism>
<sequence length="393" mass="43243">MEGVSALLARCPTAGLAGGLGVTACAAAGVLLYRIARRMKPTHTVVNCWFCNQDTVVPYGNRNCWDCPHCEQYNGFQENGDYNKPIPAQYLEHLNHVVSGSPGPRAPAQPLQWVSSQVLLCRRCSHHQTAKVKQLAAFSPRDEGRYDEEIEVYRHHLEQMYKLCRPCQAAVEHYIKHQNRQLRALLLSHQFKRREADQTHTQSFCASAVKAPAQVIVLRALAFLACAFLLTTALYGTSNPFAPGAPLPPTLPTGSNGSAPPDNGTATGAEGWRQLLGLLPEHAAEKLREAWAFGQSHQMGVVALGLLTCLLAMLLAGRIRLRRIDAFSTGLWALLLGLHLAEQYLQAASPSWLDTLKFSTTSLCCLVGFTAAVATRKATGPRRFRPRRSEKQQ</sequence>
<proteinExistence type="evidence at transcript level"/>
<accession>Q32PF0</accession>
<name>TM201_BOVIN</name>
<feature type="chain" id="PRO_0000317197" description="Transmembrane protein 201">
    <location>
        <begin position="1"/>
        <end position="393"/>
    </location>
</feature>
<feature type="topological domain" description="Nuclear" evidence="2">
    <location>
        <begin position="1"/>
        <end position="214"/>
    </location>
</feature>
<feature type="transmembrane region" description="Helical" evidence="3">
    <location>
        <begin position="215"/>
        <end position="235"/>
    </location>
</feature>
<feature type="topological domain" description="Perinuclear space" evidence="5">
    <location>
        <begin position="236"/>
        <end position="298"/>
    </location>
</feature>
<feature type="transmembrane region" description="Helical" evidence="3">
    <location>
        <begin position="299"/>
        <end position="319"/>
    </location>
</feature>
<feature type="topological domain" description="Nuclear" evidence="5">
    <location>
        <begin position="320"/>
        <end position="323"/>
    </location>
</feature>
<feature type="transmembrane region" description="Helical" evidence="3">
    <location>
        <begin position="324"/>
        <end position="344"/>
    </location>
</feature>
<feature type="topological domain" description="Perinuclear space" evidence="5">
    <location>
        <begin position="345"/>
        <end position="357"/>
    </location>
</feature>
<feature type="transmembrane region" description="Helical" evidence="3">
    <location>
        <begin position="358"/>
        <end position="375"/>
    </location>
</feature>
<feature type="topological domain" description="Nuclear" evidence="2 5">
    <location>
        <begin position="376"/>
        <end position="393"/>
    </location>
</feature>
<feature type="region of interest" description="Disordered" evidence="4">
    <location>
        <begin position="246"/>
        <end position="266"/>
    </location>
</feature>
<feature type="modified residue" description="N-acetylmethionine" evidence="2">
    <location>
        <position position="1"/>
    </location>
</feature>
<feature type="glycosylation site" description="N-linked (GlcNAc...) asparagine" evidence="3">
    <location>
        <position position="256"/>
    </location>
</feature>
<feature type="glycosylation site" description="N-linked (GlcNAc...) asparagine" evidence="3">
    <location>
        <position position="263"/>
    </location>
</feature>
<protein>
    <recommendedName>
        <fullName>Transmembrane protein 201</fullName>
    </recommendedName>
</protein>
<gene>
    <name type="primary">TMEM201</name>
</gene>
<keyword id="KW-0007">Acetylation</keyword>
<keyword id="KW-0037">Angiogenesis</keyword>
<keyword id="KW-0963">Cytoplasm</keyword>
<keyword id="KW-0206">Cytoskeleton</keyword>
<keyword id="KW-0325">Glycoprotein</keyword>
<keyword id="KW-0472">Membrane</keyword>
<keyword id="KW-0539">Nucleus</keyword>
<keyword id="KW-1185">Reference proteome</keyword>
<keyword id="KW-0812">Transmembrane</keyword>
<keyword id="KW-1133">Transmembrane helix</keyword>